<dbReference type="EC" id="2.7.7.7" evidence="3"/>
<dbReference type="EC" id="3.1.11.1" evidence="3"/>
<dbReference type="EMBL" id="CP000562">
    <property type="protein sequence ID" value="ABN58047.1"/>
    <property type="molecule type" value="Genomic_DNA"/>
</dbReference>
<dbReference type="RefSeq" id="WP_011844956.1">
    <property type="nucleotide sequence ID" value="NC_009051.1"/>
</dbReference>
<dbReference type="SMR" id="A3CXE7"/>
<dbReference type="STRING" id="368407.Memar_2124"/>
<dbReference type="MEROPS" id="N10.006"/>
<dbReference type="GeneID" id="4847324"/>
<dbReference type="KEGG" id="mem:Memar_2124"/>
<dbReference type="eggNOG" id="arCOG04447">
    <property type="taxonomic scope" value="Archaea"/>
</dbReference>
<dbReference type="HOGENOM" id="CLU_001154_0_0_2"/>
<dbReference type="OrthoDB" id="7529at2157"/>
<dbReference type="Proteomes" id="UP000002146">
    <property type="component" value="Chromosome"/>
</dbReference>
<dbReference type="GO" id="GO:0003677">
    <property type="term" value="F:DNA binding"/>
    <property type="evidence" value="ECO:0007669"/>
    <property type="project" value="UniProtKB-UniRule"/>
</dbReference>
<dbReference type="GO" id="GO:0003887">
    <property type="term" value="F:DNA-directed DNA polymerase activity"/>
    <property type="evidence" value="ECO:0007669"/>
    <property type="project" value="UniProtKB-UniRule"/>
</dbReference>
<dbReference type="GO" id="GO:0008310">
    <property type="term" value="F:single-stranded DNA 3'-5' DNA exonuclease activity"/>
    <property type="evidence" value="ECO:0007669"/>
    <property type="project" value="UniProtKB-EC"/>
</dbReference>
<dbReference type="GO" id="GO:0006308">
    <property type="term" value="P:DNA catabolic process"/>
    <property type="evidence" value="ECO:0007669"/>
    <property type="project" value="UniProtKB-UniRule"/>
</dbReference>
<dbReference type="GO" id="GO:0006261">
    <property type="term" value="P:DNA-templated DNA replication"/>
    <property type="evidence" value="ECO:0007669"/>
    <property type="project" value="UniProtKB-UniRule"/>
</dbReference>
<dbReference type="GO" id="GO:0016539">
    <property type="term" value="P:intein-mediated protein splicing"/>
    <property type="evidence" value="ECO:0007669"/>
    <property type="project" value="InterPro"/>
</dbReference>
<dbReference type="CDD" id="cd00081">
    <property type="entry name" value="Hint"/>
    <property type="match status" value="1"/>
</dbReference>
<dbReference type="Gene3D" id="2.170.16.10">
    <property type="entry name" value="Hedgehog/Intein (Hint) domain"/>
    <property type="match status" value="1"/>
</dbReference>
<dbReference type="HAMAP" id="MF_00324">
    <property type="entry name" value="DNApol_II_L_arch"/>
    <property type="match status" value="1"/>
</dbReference>
<dbReference type="InterPro" id="IPR003586">
    <property type="entry name" value="Hint_dom_C"/>
</dbReference>
<dbReference type="InterPro" id="IPR003587">
    <property type="entry name" value="Hint_dom_N"/>
</dbReference>
<dbReference type="InterPro" id="IPR036844">
    <property type="entry name" value="Hint_dom_sf"/>
</dbReference>
<dbReference type="InterPro" id="IPR030934">
    <property type="entry name" value="Intein_C"/>
</dbReference>
<dbReference type="InterPro" id="IPR006141">
    <property type="entry name" value="Intein_N"/>
</dbReference>
<dbReference type="InterPro" id="IPR004475">
    <property type="entry name" value="PolC_DP2"/>
</dbReference>
<dbReference type="InterPro" id="IPR056172">
    <property type="entry name" value="PolC_DP2_cat_dom"/>
</dbReference>
<dbReference type="InterPro" id="IPR056171">
    <property type="entry name" value="PolC_DP2_central_dom"/>
</dbReference>
<dbReference type="InterPro" id="IPR016033">
    <property type="entry name" value="PolC_DP2_N"/>
</dbReference>
<dbReference type="NCBIfam" id="TIGR01443">
    <property type="entry name" value="intein_Cterm"/>
    <property type="match status" value="1"/>
</dbReference>
<dbReference type="NCBIfam" id="TIGR01445">
    <property type="entry name" value="intein_Nterm"/>
    <property type="match status" value="1"/>
</dbReference>
<dbReference type="NCBIfam" id="TIGR00354">
    <property type="entry name" value="polC"/>
    <property type="match status" value="1"/>
</dbReference>
<dbReference type="NCBIfam" id="NF011302">
    <property type="entry name" value="PRK14714.1"/>
    <property type="match status" value="1"/>
</dbReference>
<dbReference type="PANTHER" id="PTHR42210">
    <property type="entry name" value="DNA POLYMERASE II LARGE SUBUNIT"/>
    <property type="match status" value="1"/>
</dbReference>
<dbReference type="PANTHER" id="PTHR42210:SF1">
    <property type="entry name" value="DNA POLYMERASE II LARGE SUBUNIT"/>
    <property type="match status" value="1"/>
</dbReference>
<dbReference type="Pfam" id="PF24846">
    <property type="entry name" value="PolC_DP2_cat"/>
    <property type="match status" value="2"/>
</dbReference>
<dbReference type="Pfam" id="PF24844">
    <property type="entry name" value="PolC_DP2_central"/>
    <property type="match status" value="1"/>
</dbReference>
<dbReference type="Pfam" id="PF03833">
    <property type="entry name" value="PolC_DP2_N"/>
    <property type="match status" value="1"/>
</dbReference>
<dbReference type="PIRSF" id="PIRSF016275">
    <property type="entry name" value="PolC_DP2"/>
    <property type="match status" value="1"/>
</dbReference>
<dbReference type="SMART" id="SM00305">
    <property type="entry name" value="HintC"/>
    <property type="match status" value="1"/>
</dbReference>
<dbReference type="SMART" id="SM00306">
    <property type="entry name" value="HintN"/>
    <property type="match status" value="1"/>
</dbReference>
<dbReference type="SUPFAM" id="SSF51294">
    <property type="entry name" value="Hedgehog/intein (Hint) domain"/>
    <property type="match status" value="1"/>
</dbReference>
<dbReference type="PROSITE" id="PS50818">
    <property type="entry name" value="INTEIN_C_TER"/>
    <property type="match status" value="1"/>
</dbReference>
<dbReference type="PROSITE" id="PS50817">
    <property type="entry name" value="INTEIN_N_TER"/>
    <property type="match status" value="1"/>
</dbReference>
<keyword id="KW-0068">Autocatalytic cleavage</keyword>
<keyword id="KW-0235">DNA replication</keyword>
<keyword id="KW-0238">DNA-binding</keyword>
<keyword id="KW-0239">DNA-directed DNA polymerase</keyword>
<keyword id="KW-0269">Exonuclease</keyword>
<keyword id="KW-0378">Hydrolase</keyword>
<keyword id="KW-0511">Multifunctional enzyme</keyword>
<keyword id="KW-0540">Nuclease</keyword>
<keyword id="KW-0548">Nucleotidyltransferase</keyword>
<keyword id="KW-0651">Protein splicing</keyword>
<keyword id="KW-0808">Transferase</keyword>
<proteinExistence type="inferred from homology"/>
<sequence>MEVSPAIARYFEELEGELDAAIRLAAAARARGLDPRTEIEIPVASDLADRVEALLGYKGIAARIRELEAEMSREEAALRIGDDFAARKFGETTPEEILDHAIRAAMALLTEGVVAAPTEGIGKVSLGKNDDGTDYLKIYYAGPIRSAGGTAQALSVLVGDYVRQALGINRYIPRPEEVERYIEEIRQYNNIMSLQYLPSEKELRMIIENCPVCIDGEPTEQQEVSGYRNLERVETNTVRGGMALVVAEGLALKAPKVLKNVRKMKMEGWDWIEEMIGGGPKSDDDDASAAIKPKDKYIRDLIGGRPVFSYPMRKGGFRLRLGRARNTGFAAAGFNPATLHILGDFLAVGTQMKVERPGKAAGVVPVDSIQGPTVKLRSGEVRRVDDAAEARRLAGQVDEILDVGEMLVSFGEFMENNHPLMPPAYCEEWWMLEGGPRHPENELEAIEFALDGVPLHPDYTYMWDDVAPADIARLAEAVGTGGTVEDGVLMIRNTPETKAILEELLIPHHLSGDRLAIREHLAFLACLGLTLQLTKRPAWQDAPMENSLDLVMHLSGFTVRSRAGTRIGGRMGRPGKSKPREMRPPPHSLFPIGDEGGARRSFQAACSSKPRSNTDGGVIEAEVGERQCPACGAFTYKNLCECGAHTNPVFRCPRCGKDVGQDVCPRCNAETVCLQKVTINVKAEYLAAMESLGVRESSVALLKGVKGLISRERPVEPIEKGILRALQNLYVFKDGTVRYDMIDLPLTHFRPDEVGVPIERLRELGYTHDTYGRELVSDDQVLELRHQDILVSEGCGEWLVRVAKFVDDLLVRLYGLEPFYKAEKPLDLVGHLLMGLAPHTSAGVLVRLIGFSKAPVGYGHPFFHAAKRRNCFAGDTEITVSDGRRWMSLPIRQFVTENFDISKPGLDHVGTFYSDPRQPFYVRSIDSQGKTSLKRVTSVSVHRAPAHLVRFATRRGRVLTVTPDHAMLVWDTDYLRKIKALEVAVGDRVPVEEGGLVVADEVVSRETVQALDDRVYCLTVAENHTLVANGIFCGQCDGDEDCVMLLLDGLINFSRAYLPETRGGTMDAPLVLTTRIDPSEVDKESHNVDVCDHYPIEVYNGCLAYAHPKDLDAFVDRVERRLGTPAQCEGFLFTHQTSNISAGPLESTYTRLGSMLDKLEAELDLAKRIRAVDEDDVAERVLNTHFIRDLQGNLNAFSKQKVRCMKCNAKYRRMPLAGKCTRCGGHVIPTVHEGSVKKYLEMSRNICATYAISDYTKQRVEVLFMQIESTFGEPPEKQLGLADFM</sequence>
<organism>
    <name type="scientific">Methanoculleus marisnigri (strain ATCC 35101 / DSM 1498 / JR1)</name>
    <dbReference type="NCBI Taxonomy" id="368407"/>
    <lineage>
        <taxon>Archaea</taxon>
        <taxon>Methanobacteriati</taxon>
        <taxon>Methanobacteriota</taxon>
        <taxon>Stenosarchaea group</taxon>
        <taxon>Methanomicrobia</taxon>
        <taxon>Methanomicrobiales</taxon>
        <taxon>Methanomicrobiaceae</taxon>
        <taxon>Methanoculleus</taxon>
    </lineage>
</organism>
<reference key="1">
    <citation type="journal article" date="2009" name="Stand. Genomic Sci.">
        <title>Complete genome sequence of Methanoculleus marisnigri Romesser et al. 1981 type strain JR1.</title>
        <authorList>
            <person name="Anderson I.J."/>
            <person name="Sieprawska-Lupa M."/>
            <person name="Lapidus A."/>
            <person name="Nolan M."/>
            <person name="Copeland A."/>
            <person name="Glavina Del Rio T."/>
            <person name="Tice H."/>
            <person name="Dalin E."/>
            <person name="Barry K."/>
            <person name="Saunders E."/>
            <person name="Han C."/>
            <person name="Brettin T."/>
            <person name="Detter J.C."/>
            <person name="Bruce D."/>
            <person name="Mikhailova N."/>
            <person name="Pitluck S."/>
            <person name="Hauser L."/>
            <person name="Land M."/>
            <person name="Lucas S."/>
            <person name="Richardson P."/>
            <person name="Whitman W.B."/>
            <person name="Kyrpides N.C."/>
        </authorList>
    </citation>
    <scope>NUCLEOTIDE SEQUENCE [LARGE SCALE GENOMIC DNA]</scope>
    <source>
        <strain>ATCC 35101 / DSM 1498 / JR1</strain>
    </source>
</reference>
<protein>
    <recommendedName>
        <fullName evidence="3">DNA polymerase II large subunit</fullName>
        <shortName evidence="3">Pol II</shortName>
        <ecNumber evidence="3">2.7.7.7</ecNumber>
    </recommendedName>
    <alternativeName>
        <fullName evidence="3">Exodeoxyribonuclease large subunit</fullName>
        <ecNumber evidence="3">3.1.11.1</ecNumber>
    </alternativeName>
    <component>
        <recommendedName>
            <fullName>Memar polC intein</fullName>
        </recommendedName>
        <alternativeName>
            <fullName>Memar pol II intein</fullName>
        </alternativeName>
    </component>
</protein>
<accession>A3CXE7</accession>
<comment type="function">
    <text evidence="1">Possesses two activities: a DNA synthesis (polymerase) and an exonucleolytic activity that degrades single-stranded DNA in the 3'- to 5'-direction. Has a template-primer preference which is characteristic of a replicative DNA polymerase (By similarity).</text>
</comment>
<comment type="catalytic activity">
    <reaction evidence="3">
        <text>DNA(n) + a 2'-deoxyribonucleoside 5'-triphosphate = DNA(n+1) + diphosphate</text>
        <dbReference type="Rhea" id="RHEA:22508"/>
        <dbReference type="Rhea" id="RHEA-COMP:17339"/>
        <dbReference type="Rhea" id="RHEA-COMP:17340"/>
        <dbReference type="ChEBI" id="CHEBI:33019"/>
        <dbReference type="ChEBI" id="CHEBI:61560"/>
        <dbReference type="ChEBI" id="CHEBI:173112"/>
        <dbReference type="EC" id="2.7.7.7"/>
    </reaction>
</comment>
<comment type="catalytic activity">
    <reaction evidence="3">
        <text>Exonucleolytic cleavage in the 3'- to 5'-direction to yield nucleoside 5'-phosphates.</text>
        <dbReference type="EC" id="3.1.11.1"/>
    </reaction>
</comment>
<comment type="subunit">
    <text evidence="3">Heterodimer of a large subunit and a small subunit.</text>
</comment>
<comment type="PTM">
    <text evidence="5">This protein undergoes a protein self splicing that involves a post-translational excision of the intervening region (intein) followed by peptide ligation.</text>
</comment>
<comment type="similarity">
    <text evidence="3">Belongs to the archaeal DNA polymerase II family.</text>
</comment>
<feature type="chain" id="PRO_0000294688" description="DNA polymerase II large subunit, 1st part" evidence="2">
    <location>
        <begin position="1"/>
        <end position="870"/>
    </location>
</feature>
<feature type="chain" id="PRO_0000294689" description="Memar polC intein" evidence="2">
    <location>
        <begin position="871"/>
        <end position="1035"/>
    </location>
</feature>
<feature type="chain" id="PRO_0000294690" description="DNA polymerase II large subunit, 2nd part" evidence="2">
    <location>
        <begin position="1036"/>
        <end position="1285"/>
    </location>
</feature>
<feature type="region of interest" description="Disordered" evidence="4">
    <location>
        <begin position="565"/>
        <end position="586"/>
    </location>
</feature>
<name>DP2L_METMJ</name>
<evidence type="ECO:0000250" key="1"/>
<evidence type="ECO:0000255" key="2"/>
<evidence type="ECO:0000255" key="3">
    <source>
        <dbReference type="HAMAP-Rule" id="MF_00324"/>
    </source>
</evidence>
<evidence type="ECO:0000256" key="4">
    <source>
        <dbReference type="SAM" id="MobiDB-lite"/>
    </source>
</evidence>
<evidence type="ECO:0000305" key="5"/>
<gene>
    <name evidence="3" type="primary">polC</name>
    <name type="ordered locus">Memar_2124</name>
</gene>